<gene>
    <name evidence="1" type="primary">ileS</name>
    <name type="ordered locus">A1C_04840</name>
</gene>
<accession>A8GPA1</accession>
<comment type="function">
    <text evidence="1">Catalyzes the attachment of isoleucine to tRNA(Ile). As IleRS can inadvertently accommodate and process structurally similar amino acids such as valine, to avoid such errors it has two additional distinct tRNA(Ile)-dependent editing activities. One activity is designated as 'pretransfer' editing and involves the hydrolysis of activated Val-AMP. The other activity is designated 'posttransfer' editing and involves deacylation of mischarged Val-tRNA(Ile).</text>
</comment>
<comment type="catalytic activity">
    <reaction evidence="1">
        <text>tRNA(Ile) + L-isoleucine + ATP = L-isoleucyl-tRNA(Ile) + AMP + diphosphate</text>
        <dbReference type="Rhea" id="RHEA:11060"/>
        <dbReference type="Rhea" id="RHEA-COMP:9666"/>
        <dbReference type="Rhea" id="RHEA-COMP:9695"/>
        <dbReference type="ChEBI" id="CHEBI:30616"/>
        <dbReference type="ChEBI" id="CHEBI:33019"/>
        <dbReference type="ChEBI" id="CHEBI:58045"/>
        <dbReference type="ChEBI" id="CHEBI:78442"/>
        <dbReference type="ChEBI" id="CHEBI:78528"/>
        <dbReference type="ChEBI" id="CHEBI:456215"/>
        <dbReference type="EC" id="6.1.1.5"/>
    </reaction>
</comment>
<comment type="cofactor">
    <cofactor evidence="1">
        <name>Zn(2+)</name>
        <dbReference type="ChEBI" id="CHEBI:29105"/>
    </cofactor>
</comment>
<comment type="subunit">
    <text evidence="1">Monomer.</text>
</comment>
<comment type="subcellular location">
    <subcellularLocation>
        <location evidence="1">Cytoplasm</location>
    </subcellularLocation>
</comment>
<comment type="domain">
    <text evidence="1">IleRS has two distinct active sites: one for aminoacylation and one for editing. The misactivated valine is translocated from the active site to the editing site, which sterically excludes the correctly activated isoleucine. The single editing site contains two valyl binding pockets, one specific for each substrate (Val-AMP or Val-tRNA(Ile)).</text>
</comment>
<comment type="similarity">
    <text evidence="1">Belongs to the class-I aminoacyl-tRNA synthetase family. IleS type 2 subfamily.</text>
</comment>
<dbReference type="EC" id="6.1.1.5" evidence="1"/>
<dbReference type="EMBL" id="CP000847">
    <property type="protein sequence ID" value="ABV75226.1"/>
    <property type="molecule type" value="Genomic_DNA"/>
</dbReference>
<dbReference type="RefSeq" id="WP_012149856.1">
    <property type="nucleotide sequence ID" value="NC_009881.1"/>
</dbReference>
<dbReference type="SMR" id="A8GPA1"/>
<dbReference type="STRING" id="293614.A1C_04840"/>
<dbReference type="KEGG" id="rak:A1C_04840"/>
<dbReference type="eggNOG" id="COG0060">
    <property type="taxonomic scope" value="Bacteria"/>
</dbReference>
<dbReference type="HOGENOM" id="CLU_001493_1_1_5"/>
<dbReference type="Proteomes" id="UP000006830">
    <property type="component" value="Chromosome"/>
</dbReference>
<dbReference type="GO" id="GO:0005737">
    <property type="term" value="C:cytoplasm"/>
    <property type="evidence" value="ECO:0007669"/>
    <property type="project" value="UniProtKB-SubCell"/>
</dbReference>
<dbReference type="GO" id="GO:0002161">
    <property type="term" value="F:aminoacyl-tRNA deacylase activity"/>
    <property type="evidence" value="ECO:0007669"/>
    <property type="project" value="InterPro"/>
</dbReference>
<dbReference type="GO" id="GO:0005524">
    <property type="term" value="F:ATP binding"/>
    <property type="evidence" value="ECO:0007669"/>
    <property type="project" value="UniProtKB-UniRule"/>
</dbReference>
<dbReference type="GO" id="GO:0004822">
    <property type="term" value="F:isoleucine-tRNA ligase activity"/>
    <property type="evidence" value="ECO:0007669"/>
    <property type="project" value="UniProtKB-UniRule"/>
</dbReference>
<dbReference type="GO" id="GO:0000049">
    <property type="term" value="F:tRNA binding"/>
    <property type="evidence" value="ECO:0007669"/>
    <property type="project" value="InterPro"/>
</dbReference>
<dbReference type="GO" id="GO:0008270">
    <property type="term" value="F:zinc ion binding"/>
    <property type="evidence" value="ECO:0007669"/>
    <property type="project" value="UniProtKB-UniRule"/>
</dbReference>
<dbReference type="GO" id="GO:0006428">
    <property type="term" value="P:isoleucyl-tRNA aminoacylation"/>
    <property type="evidence" value="ECO:0007669"/>
    <property type="project" value="UniProtKB-UniRule"/>
</dbReference>
<dbReference type="CDD" id="cd07961">
    <property type="entry name" value="Anticodon_Ia_Ile_ABEc"/>
    <property type="match status" value="1"/>
</dbReference>
<dbReference type="CDD" id="cd00818">
    <property type="entry name" value="IleRS_core"/>
    <property type="match status" value="1"/>
</dbReference>
<dbReference type="FunFam" id="3.40.50.620:FF:000205">
    <property type="entry name" value="Isoleucine--tRNA ligase"/>
    <property type="match status" value="1"/>
</dbReference>
<dbReference type="FunFam" id="3.40.50.620:FF:000241">
    <property type="entry name" value="Isoleucine--tRNA ligase"/>
    <property type="match status" value="1"/>
</dbReference>
<dbReference type="Gene3D" id="3.40.50.620">
    <property type="entry name" value="HUPs"/>
    <property type="match status" value="2"/>
</dbReference>
<dbReference type="Gene3D" id="1.10.730.10">
    <property type="entry name" value="Isoleucyl-tRNA Synthetase, Domain 1"/>
    <property type="match status" value="1"/>
</dbReference>
<dbReference type="HAMAP" id="MF_02003">
    <property type="entry name" value="Ile_tRNA_synth_type2"/>
    <property type="match status" value="1"/>
</dbReference>
<dbReference type="InterPro" id="IPR001412">
    <property type="entry name" value="aa-tRNA-synth_I_CS"/>
</dbReference>
<dbReference type="InterPro" id="IPR002300">
    <property type="entry name" value="aa-tRNA-synth_Ia"/>
</dbReference>
<dbReference type="InterPro" id="IPR033709">
    <property type="entry name" value="Anticodon_Ile_ABEc"/>
</dbReference>
<dbReference type="InterPro" id="IPR002301">
    <property type="entry name" value="Ile-tRNA-ligase"/>
</dbReference>
<dbReference type="InterPro" id="IPR023586">
    <property type="entry name" value="Ile-tRNA-ligase_type2"/>
</dbReference>
<dbReference type="InterPro" id="IPR013155">
    <property type="entry name" value="M/V/L/I-tRNA-synth_anticd-bd"/>
</dbReference>
<dbReference type="InterPro" id="IPR014729">
    <property type="entry name" value="Rossmann-like_a/b/a_fold"/>
</dbReference>
<dbReference type="InterPro" id="IPR022439">
    <property type="entry name" value="RPE4"/>
</dbReference>
<dbReference type="InterPro" id="IPR009080">
    <property type="entry name" value="tRNAsynth_Ia_anticodon-bd"/>
</dbReference>
<dbReference type="InterPro" id="IPR009008">
    <property type="entry name" value="Val/Leu/Ile-tRNA-synth_edit"/>
</dbReference>
<dbReference type="NCBIfam" id="TIGR00392">
    <property type="entry name" value="ileS"/>
    <property type="match status" value="1"/>
</dbReference>
<dbReference type="NCBIfam" id="TIGR03777">
    <property type="entry name" value="RPE4"/>
    <property type="match status" value="1"/>
</dbReference>
<dbReference type="PANTHER" id="PTHR42780:SF1">
    <property type="entry name" value="ISOLEUCINE--TRNA LIGASE, CYTOPLASMIC"/>
    <property type="match status" value="1"/>
</dbReference>
<dbReference type="PANTHER" id="PTHR42780">
    <property type="entry name" value="SOLEUCYL-TRNA SYNTHETASE"/>
    <property type="match status" value="1"/>
</dbReference>
<dbReference type="Pfam" id="PF08264">
    <property type="entry name" value="Anticodon_1"/>
    <property type="match status" value="1"/>
</dbReference>
<dbReference type="Pfam" id="PF19302">
    <property type="entry name" value="DUF5915"/>
    <property type="match status" value="1"/>
</dbReference>
<dbReference type="Pfam" id="PF00133">
    <property type="entry name" value="tRNA-synt_1"/>
    <property type="match status" value="1"/>
</dbReference>
<dbReference type="PRINTS" id="PR00984">
    <property type="entry name" value="TRNASYNTHILE"/>
</dbReference>
<dbReference type="SUPFAM" id="SSF47323">
    <property type="entry name" value="Anticodon-binding domain of a subclass of class I aminoacyl-tRNA synthetases"/>
    <property type="match status" value="1"/>
</dbReference>
<dbReference type="SUPFAM" id="SSF52374">
    <property type="entry name" value="Nucleotidylyl transferase"/>
    <property type="match status" value="1"/>
</dbReference>
<dbReference type="SUPFAM" id="SSF50677">
    <property type="entry name" value="ValRS/IleRS/LeuRS editing domain"/>
    <property type="match status" value="1"/>
</dbReference>
<dbReference type="PROSITE" id="PS00178">
    <property type="entry name" value="AA_TRNA_LIGASE_I"/>
    <property type="match status" value="1"/>
</dbReference>
<proteinExistence type="inferred from homology"/>
<keyword id="KW-0030">Aminoacyl-tRNA synthetase</keyword>
<keyword id="KW-0067">ATP-binding</keyword>
<keyword id="KW-0963">Cytoplasm</keyword>
<keyword id="KW-0436">Ligase</keyword>
<keyword id="KW-0479">Metal-binding</keyword>
<keyword id="KW-0547">Nucleotide-binding</keyword>
<keyword id="KW-0648">Protein biosynthesis</keyword>
<keyword id="KW-0862">Zinc</keyword>
<name>SYI_RICAH</name>
<protein>
    <recommendedName>
        <fullName evidence="1">Isoleucine--tRNA ligase</fullName>
        <ecNumber evidence="1">6.1.1.5</ecNumber>
    </recommendedName>
    <alternativeName>
        <fullName evidence="1">Isoleucyl-tRNA synthetase</fullName>
        <shortName evidence="1">IleRS</shortName>
    </alternativeName>
</protein>
<feature type="chain" id="PRO_1000022158" description="Isoleucine--tRNA ligase">
    <location>
        <begin position="1"/>
        <end position="1103"/>
    </location>
</feature>
<feature type="short sequence motif" description="'HIGH' region">
    <location>
        <begin position="53"/>
        <end position="63"/>
    </location>
</feature>
<feature type="short sequence motif" description="'KMSKS' region">
    <location>
        <begin position="628"/>
        <end position="632"/>
    </location>
</feature>
<feature type="binding site" evidence="1">
    <location>
        <position position="631"/>
    </location>
    <ligand>
        <name>ATP</name>
        <dbReference type="ChEBI" id="CHEBI:30616"/>
    </ligand>
</feature>
<reference key="1">
    <citation type="submission" date="2007-09" db="EMBL/GenBank/DDBJ databases">
        <title>Complete genome sequence of Rickettsia akari.</title>
        <authorList>
            <person name="Madan A."/>
            <person name="Fahey J."/>
            <person name="Helton E."/>
            <person name="Ketteman M."/>
            <person name="Madan A."/>
            <person name="Rodrigues S."/>
            <person name="Sanchez A."/>
            <person name="Whiting M."/>
            <person name="Dasch G."/>
            <person name="Eremeeva M."/>
        </authorList>
    </citation>
    <scope>NUCLEOTIDE SEQUENCE [LARGE SCALE GENOMIC DNA]</scope>
    <source>
        <strain>Hartford</strain>
    </source>
</reference>
<evidence type="ECO:0000255" key="1">
    <source>
        <dbReference type="HAMAP-Rule" id="MF_02003"/>
    </source>
</evidence>
<organism>
    <name type="scientific">Rickettsia akari (strain Hartford)</name>
    <dbReference type="NCBI Taxonomy" id="293614"/>
    <lineage>
        <taxon>Bacteria</taxon>
        <taxon>Pseudomonadati</taxon>
        <taxon>Pseudomonadota</taxon>
        <taxon>Alphaproteobacteria</taxon>
        <taxon>Rickettsiales</taxon>
        <taxon>Rickettsiaceae</taxon>
        <taxon>Rickettsieae</taxon>
        <taxon>Rickettsia</taxon>
        <taxon>spotted fever group</taxon>
    </lineage>
</organism>
<sequence length="1103" mass="126771">MANTKYYPEVSSNANFAAIEREILKFWQDNNIFQKSIDGRNGESEFIFYDGPPFANGLPHYGHLLTGFIKDVYARYQTVKGKKVERRFGWDCHGLPAEMQSEKELGISGRLAITNFGIEKFNAHCRASVMEYASDWEEYVTRQARWVDFKNSYKTMDKNFMESVLWAFKELYNKGLLCESMRVVPYSWACETPLSNFETRLDNSYRERSDKAVTVSFVLRDKLHEIPAFAGMISRESEMTVGGDYQEYRILTWTTTPWTLPSNLAIAVGSDIDYALVPQENICYIIAASSVSKYAKELGLSGEENFEIIKGSQLQGLRYKPLFDYFEHHPNSFKIFDVDFVVEGDGTGVVHMAPGFGEDDQILCESKGISLVCPVDNSGKFTKEIPDLEGVQVFDANDKIIIKLKEQGNWLKTEQYIHNYPHCWRTDTPLIYKAVPSWYVKVTQFKDRMVELNQQINWIPHHVKDNLFGKWLENARDWSISRNRFWGTPLPVWKSDDPKYPRIDVYGSIEELEKDFGVKVTDLHRPFIDKLTRPNPNDPTGKSTMRRIEDVFDCWFESGSMPYGQAHYPFENKEWFEDHFPADFIVEYSAQTRGWFYTLMVLSTALFDRPPFLNCICHGVILDATGQKLSKRLNNYADPLELFDQYGSDALRVTMLSSNIVKGQELLIDKDGKMVFDTLRLFIKPIWSSYHFFTMYANADSLKGEISFASENVLDVYILSKLKIAVSKIEESLDNFDTQTAYHAVLEFFEVLNNWYIRRSRARFWKSEKDTDKQNAYNTLYSCLKTMAIAMSALVPMISEAIYKGLCHCEETSTLSSRDLIAGSSKSINNLNPVVKPRDYTPSVHHNDQISVHLCNYPTLSDFEINHELVATMDNVLDICSNSLFIRSTKNIRVRQPLASITIISKHNNDLKAFENLIKDEINVKSVIYCDDLENYASKKLSINFPMLGKRLPAKMKEIIAASKKGDWKAIAGGLTICGETLNNEEYKLILEPYSHIKGAASFENNSSLLILDLELTAELIEEGYARDIVRFIQQARKDAGFSITDRILIEIISEFDLSEIIYNYGDFITEQTLGEFSKNFTPDYVSKVELEDHPIQLKIKKS</sequence>